<feature type="chain" id="PRO_0000238130" description="Small ribosomal subunit protein uS12">
    <location>
        <begin position="1"/>
        <end position="124"/>
    </location>
</feature>
<feature type="region of interest" description="Disordered" evidence="3">
    <location>
        <begin position="1"/>
        <end position="32"/>
    </location>
</feature>
<feature type="compositionally biased region" description="Basic and acidic residues" evidence="3">
    <location>
        <begin position="11"/>
        <end position="20"/>
    </location>
</feature>
<feature type="modified residue" description="3-methylthioaspartic acid" evidence="1">
    <location>
        <position position="89"/>
    </location>
</feature>
<comment type="function">
    <text evidence="2">With S4 and S5 plays an important role in translational accuracy.</text>
</comment>
<comment type="function">
    <text evidence="2">Interacts with and stabilizes bases of the 16S rRNA that are involved in tRNA selection in the A site and with the mRNA backbone. Located at the interface of the 30S and 50S subunits, it traverses the body of the 30S subunit contacting proteins on the other side and probably holding the rRNA structure together. The combined cluster of proteins S8, S12 and S17 appears to hold together the shoulder and platform of the 30S subunit.</text>
</comment>
<comment type="subunit">
    <text evidence="2">Part of the 30S ribosomal subunit. Contacts proteins S8 and S17. May interact with IF1 in the 30S initiation complex.</text>
</comment>
<comment type="similarity">
    <text evidence="2">Belongs to the universal ribosomal protein uS12 family.</text>
</comment>
<name>RS12_FRACC</name>
<keyword id="KW-0488">Methylation</keyword>
<keyword id="KW-1185">Reference proteome</keyword>
<keyword id="KW-0687">Ribonucleoprotein</keyword>
<keyword id="KW-0689">Ribosomal protein</keyword>
<keyword id="KW-0694">RNA-binding</keyword>
<keyword id="KW-0699">rRNA-binding</keyword>
<keyword id="KW-0820">tRNA-binding</keyword>
<reference key="1">
    <citation type="journal article" date="2007" name="Genome Res.">
        <title>Genome characteristics of facultatively symbiotic Frankia sp. strains reflect host range and host plant biogeography.</title>
        <authorList>
            <person name="Normand P."/>
            <person name="Lapierre P."/>
            <person name="Tisa L.S."/>
            <person name="Gogarten J.P."/>
            <person name="Alloisio N."/>
            <person name="Bagnarol E."/>
            <person name="Bassi C.A."/>
            <person name="Berry A.M."/>
            <person name="Bickhart D.M."/>
            <person name="Choisne N."/>
            <person name="Couloux A."/>
            <person name="Cournoyer B."/>
            <person name="Cruveiller S."/>
            <person name="Daubin V."/>
            <person name="Demange N."/>
            <person name="Francino M.P."/>
            <person name="Goltsman E."/>
            <person name="Huang Y."/>
            <person name="Kopp O.R."/>
            <person name="Labarre L."/>
            <person name="Lapidus A."/>
            <person name="Lavire C."/>
            <person name="Marechal J."/>
            <person name="Martinez M."/>
            <person name="Mastronunzio J.E."/>
            <person name="Mullin B.C."/>
            <person name="Niemann J."/>
            <person name="Pujic P."/>
            <person name="Rawnsley T."/>
            <person name="Rouy Z."/>
            <person name="Schenowitz C."/>
            <person name="Sellstedt A."/>
            <person name="Tavares F."/>
            <person name="Tomkins J.P."/>
            <person name="Vallenet D."/>
            <person name="Valverde C."/>
            <person name="Wall L.G."/>
            <person name="Wang Y."/>
            <person name="Medigue C."/>
            <person name="Benson D.R."/>
        </authorList>
    </citation>
    <scope>NUCLEOTIDE SEQUENCE [LARGE SCALE GENOMIC DNA]</scope>
    <source>
        <strain>DSM 45818 / CECT 9043 / HFP020203 / CcI3</strain>
    </source>
</reference>
<gene>
    <name evidence="2" type="primary">rpsL</name>
    <name type="ordered locus">Francci3_0577</name>
</gene>
<proteinExistence type="inferred from homology"/>
<protein>
    <recommendedName>
        <fullName evidence="2">Small ribosomal subunit protein uS12</fullName>
    </recommendedName>
    <alternativeName>
        <fullName evidence="4">30S ribosomal protein S12</fullName>
    </alternativeName>
</protein>
<evidence type="ECO:0000250" key="1"/>
<evidence type="ECO:0000255" key="2">
    <source>
        <dbReference type="HAMAP-Rule" id="MF_00403"/>
    </source>
</evidence>
<evidence type="ECO:0000256" key="3">
    <source>
        <dbReference type="SAM" id="MobiDB-lite"/>
    </source>
</evidence>
<evidence type="ECO:0000305" key="4"/>
<dbReference type="EMBL" id="CP000249">
    <property type="protein sequence ID" value="ABD09961.1"/>
    <property type="molecule type" value="Genomic_DNA"/>
</dbReference>
<dbReference type="RefSeq" id="WP_009740532.1">
    <property type="nucleotide sequence ID" value="NZ_MSEA01000425.1"/>
</dbReference>
<dbReference type="SMR" id="Q2JFI1"/>
<dbReference type="STRING" id="106370.Francci3_0577"/>
<dbReference type="KEGG" id="fra:Francci3_0577"/>
<dbReference type="eggNOG" id="COG0048">
    <property type="taxonomic scope" value="Bacteria"/>
</dbReference>
<dbReference type="HOGENOM" id="CLU_104295_1_2_11"/>
<dbReference type="OrthoDB" id="9802366at2"/>
<dbReference type="PhylomeDB" id="Q2JFI1"/>
<dbReference type="Proteomes" id="UP000001937">
    <property type="component" value="Chromosome"/>
</dbReference>
<dbReference type="GO" id="GO:0015935">
    <property type="term" value="C:small ribosomal subunit"/>
    <property type="evidence" value="ECO:0007669"/>
    <property type="project" value="InterPro"/>
</dbReference>
<dbReference type="GO" id="GO:0019843">
    <property type="term" value="F:rRNA binding"/>
    <property type="evidence" value="ECO:0007669"/>
    <property type="project" value="UniProtKB-UniRule"/>
</dbReference>
<dbReference type="GO" id="GO:0003735">
    <property type="term" value="F:structural constituent of ribosome"/>
    <property type="evidence" value="ECO:0007669"/>
    <property type="project" value="InterPro"/>
</dbReference>
<dbReference type="GO" id="GO:0000049">
    <property type="term" value="F:tRNA binding"/>
    <property type="evidence" value="ECO:0007669"/>
    <property type="project" value="UniProtKB-UniRule"/>
</dbReference>
<dbReference type="GO" id="GO:0006412">
    <property type="term" value="P:translation"/>
    <property type="evidence" value="ECO:0007669"/>
    <property type="project" value="UniProtKB-UniRule"/>
</dbReference>
<dbReference type="CDD" id="cd03368">
    <property type="entry name" value="Ribosomal_S12"/>
    <property type="match status" value="1"/>
</dbReference>
<dbReference type="FunFam" id="2.40.50.140:FF:000001">
    <property type="entry name" value="30S ribosomal protein S12"/>
    <property type="match status" value="1"/>
</dbReference>
<dbReference type="Gene3D" id="2.40.50.140">
    <property type="entry name" value="Nucleic acid-binding proteins"/>
    <property type="match status" value="1"/>
</dbReference>
<dbReference type="HAMAP" id="MF_00403_B">
    <property type="entry name" value="Ribosomal_uS12_B"/>
    <property type="match status" value="1"/>
</dbReference>
<dbReference type="InterPro" id="IPR012340">
    <property type="entry name" value="NA-bd_OB-fold"/>
</dbReference>
<dbReference type="InterPro" id="IPR006032">
    <property type="entry name" value="Ribosomal_uS12"/>
</dbReference>
<dbReference type="InterPro" id="IPR005679">
    <property type="entry name" value="Ribosomal_uS12_bac"/>
</dbReference>
<dbReference type="NCBIfam" id="TIGR00981">
    <property type="entry name" value="rpsL_bact"/>
    <property type="match status" value="1"/>
</dbReference>
<dbReference type="PANTHER" id="PTHR11652">
    <property type="entry name" value="30S RIBOSOMAL PROTEIN S12 FAMILY MEMBER"/>
    <property type="match status" value="1"/>
</dbReference>
<dbReference type="Pfam" id="PF00164">
    <property type="entry name" value="Ribosom_S12_S23"/>
    <property type="match status" value="1"/>
</dbReference>
<dbReference type="PIRSF" id="PIRSF002133">
    <property type="entry name" value="Ribosomal_S12/S23"/>
    <property type="match status" value="1"/>
</dbReference>
<dbReference type="PRINTS" id="PR01034">
    <property type="entry name" value="RIBOSOMALS12"/>
</dbReference>
<dbReference type="SUPFAM" id="SSF50249">
    <property type="entry name" value="Nucleic acid-binding proteins"/>
    <property type="match status" value="1"/>
</dbReference>
<dbReference type="PROSITE" id="PS00055">
    <property type="entry name" value="RIBOSOMAL_S12"/>
    <property type="match status" value="1"/>
</dbReference>
<accession>Q2JFI1</accession>
<sequence length="124" mass="13811">MPTIQQLVRKGRQDKVEKTKTPALKGSPQRRGVCTRVYTTTPKKPNSALRKVARVRLNSGIEVTAYIPGVGHNLQEHSIVLVRGGRVKDLPGVRYKIVRGALDTQGVRNRKQARSRYGAKKEKG</sequence>
<organism>
    <name type="scientific">Frankia casuarinae (strain DSM 45818 / CECT 9043 / HFP020203 / CcI3)</name>
    <dbReference type="NCBI Taxonomy" id="106370"/>
    <lineage>
        <taxon>Bacteria</taxon>
        <taxon>Bacillati</taxon>
        <taxon>Actinomycetota</taxon>
        <taxon>Actinomycetes</taxon>
        <taxon>Frankiales</taxon>
        <taxon>Frankiaceae</taxon>
        <taxon>Frankia</taxon>
    </lineage>
</organism>